<reference key="1">
    <citation type="submission" date="2007-10" db="EMBL/GenBank/DDBJ databases">
        <title>Complete sequence of Desulfococcus oleovorans Hxd3.</title>
        <authorList>
            <consortium name="US DOE Joint Genome Institute"/>
            <person name="Copeland A."/>
            <person name="Lucas S."/>
            <person name="Lapidus A."/>
            <person name="Barry K."/>
            <person name="Glavina del Rio T."/>
            <person name="Dalin E."/>
            <person name="Tice H."/>
            <person name="Pitluck S."/>
            <person name="Kiss H."/>
            <person name="Brettin T."/>
            <person name="Bruce D."/>
            <person name="Detter J.C."/>
            <person name="Han C."/>
            <person name="Schmutz J."/>
            <person name="Larimer F."/>
            <person name="Land M."/>
            <person name="Hauser L."/>
            <person name="Kyrpides N."/>
            <person name="Kim E."/>
            <person name="Wawrik B."/>
            <person name="Richardson P."/>
        </authorList>
    </citation>
    <scope>NUCLEOTIDE SEQUENCE [LARGE SCALE GENOMIC DNA]</scope>
    <source>
        <strain>DSM 6200 / JCM 39069 / Hxd3</strain>
    </source>
</reference>
<evidence type="ECO:0000255" key="1">
    <source>
        <dbReference type="HAMAP-Rule" id="MF_01973"/>
    </source>
</evidence>
<evidence type="ECO:0000255" key="2">
    <source>
        <dbReference type="PROSITE-ProRule" id="PRU01122"/>
    </source>
</evidence>
<evidence type="ECO:0000255" key="3">
    <source>
        <dbReference type="PROSITE-ProRule" id="PRU01123"/>
    </source>
</evidence>
<evidence type="ECO:0000256" key="4">
    <source>
        <dbReference type="SAM" id="MobiDB-lite"/>
    </source>
</evidence>
<organism>
    <name type="scientific">Desulfosudis oleivorans (strain DSM 6200 / JCM 39069 / Hxd3)</name>
    <name type="common">Desulfococcus oleovorans</name>
    <dbReference type="NCBI Taxonomy" id="96561"/>
    <lineage>
        <taxon>Bacteria</taxon>
        <taxon>Pseudomonadati</taxon>
        <taxon>Thermodesulfobacteriota</taxon>
        <taxon>Desulfobacteria</taxon>
        <taxon>Desulfobacterales</taxon>
        <taxon>Desulfosudaceae</taxon>
        <taxon>Desulfosudis</taxon>
    </lineage>
</organism>
<dbReference type="EC" id="3.4.21.53" evidence="1"/>
<dbReference type="EMBL" id="CP000859">
    <property type="protein sequence ID" value="ABW66906.1"/>
    <property type="molecule type" value="Genomic_DNA"/>
</dbReference>
<dbReference type="RefSeq" id="WP_012174524.1">
    <property type="nucleotide sequence ID" value="NC_009943.1"/>
</dbReference>
<dbReference type="SMR" id="A8ZX50"/>
<dbReference type="STRING" id="96561.Dole_1099"/>
<dbReference type="KEGG" id="dol:Dole_1099"/>
<dbReference type="eggNOG" id="COG0466">
    <property type="taxonomic scope" value="Bacteria"/>
</dbReference>
<dbReference type="HOGENOM" id="CLU_004109_4_3_7"/>
<dbReference type="OrthoDB" id="9803599at2"/>
<dbReference type="Proteomes" id="UP000008561">
    <property type="component" value="Chromosome"/>
</dbReference>
<dbReference type="GO" id="GO:0005737">
    <property type="term" value="C:cytoplasm"/>
    <property type="evidence" value="ECO:0007669"/>
    <property type="project" value="UniProtKB-SubCell"/>
</dbReference>
<dbReference type="GO" id="GO:0005524">
    <property type="term" value="F:ATP binding"/>
    <property type="evidence" value="ECO:0007669"/>
    <property type="project" value="UniProtKB-UniRule"/>
</dbReference>
<dbReference type="GO" id="GO:0016887">
    <property type="term" value="F:ATP hydrolysis activity"/>
    <property type="evidence" value="ECO:0007669"/>
    <property type="project" value="UniProtKB-UniRule"/>
</dbReference>
<dbReference type="GO" id="GO:0004176">
    <property type="term" value="F:ATP-dependent peptidase activity"/>
    <property type="evidence" value="ECO:0007669"/>
    <property type="project" value="UniProtKB-UniRule"/>
</dbReference>
<dbReference type="GO" id="GO:0043565">
    <property type="term" value="F:sequence-specific DNA binding"/>
    <property type="evidence" value="ECO:0007669"/>
    <property type="project" value="UniProtKB-UniRule"/>
</dbReference>
<dbReference type="GO" id="GO:0004252">
    <property type="term" value="F:serine-type endopeptidase activity"/>
    <property type="evidence" value="ECO:0007669"/>
    <property type="project" value="UniProtKB-UniRule"/>
</dbReference>
<dbReference type="GO" id="GO:0034605">
    <property type="term" value="P:cellular response to heat"/>
    <property type="evidence" value="ECO:0007669"/>
    <property type="project" value="UniProtKB-UniRule"/>
</dbReference>
<dbReference type="GO" id="GO:0006515">
    <property type="term" value="P:protein quality control for misfolded or incompletely synthesized proteins"/>
    <property type="evidence" value="ECO:0007669"/>
    <property type="project" value="UniProtKB-UniRule"/>
</dbReference>
<dbReference type="CDD" id="cd19500">
    <property type="entry name" value="RecA-like_Lon"/>
    <property type="match status" value="1"/>
</dbReference>
<dbReference type="FunFam" id="1.20.5.5270:FF:000002">
    <property type="entry name" value="Lon protease homolog"/>
    <property type="match status" value="1"/>
</dbReference>
<dbReference type="FunFam" id="3.30.230.10:FF:000019">
    <property type="entry name" value="Lon protease homolog 2, peroxisomal"/>
    <property type="match status" value="1"/>
</dbReference>
<dbReference type="FunFam" id="3.40.50.300:FF:000382">
    <property type="entry name" value="Lon protease homolog 2, peroxisomal"/>
    <property type="match status" value="1"/>
</dbReference>
<dbReference type="Gene3D" id="1.10.8.60">
    <property type="match status" value="1"/>
</dbReference>
<dbReference type="Gene3D" id="1.20.5.5270">
    <property type="match status" value="1"/>
</dbReference>
<dbReference type="Gene3D" id="1.20.58.1480">
    <property type="match status" value="1"/>
</dbReference>
<dbReference type="Gene3D" id="3.30.230.10">
    <property type="match status" value="1"/>
</dbReference>
<dbReference type="Gene3D" id="2.30.130.40">
    <property type="entry name" value="LON domain-like"/>
    <property type="match status" value="1"/>
</dbReference>
<dbReference type="Gene3D" id="3.40.50.300">
    <property type="entry name" value="P-loop containing nucleotide triphosphate hydrolases"/>
    <property type="match status" value="1"/>
</dbReference>
<dbReference type="HAMAP" id="MF_01973">
    <property type="entry name" value="lon_bact"/>
    <property type="match status" value="1"/>
</dbReference>
<dbReference type="InterPro" id="IPR003593">
    <property type="entry name" value="AAA+_ATPase"/>
</dbReference>
<dbReference type="InterPro" id="IPR003959">
    <property type="entry name" value="ATPase_AAA_core"/>
</dbReference>
<dbReference type="InterPro" id="IPR027543">
    <property type="entry name" value="Lon_bac"/>
</dbReference>
<dbReference type="InterPro" id="IPR004815">
    <property type="entry name" value="Lon_bac/euk-typ"/>
</dbReference>
<dbReference type="InterPro" id="IPR054594">
    <property type="entry name" value="Lon_lid"/>
</dbReference>
<dbReference type="InterPro" id="IPR008269">
    <property type="entry name" value="Lon_proteolytic"/>
</dbReference>
<dbReference type="InterPro" id="IPR027065">
    <property type="entry name" value="Lon_Prtase"/>
</dbReference>
<dbReference type="InterPro" id="IPR003111">
    <property type="entry name" value="Lon_prtase_N"/>
</dbReference>
<dbReference type="InterPro" id="IPR046336">
    <property type="entry name" value="Lon_prtase_N_sf"/>
</dbReference>
<dbReference type="InterPro" id="IPR027417">
    <property type="entry name" value="P-loop_NTPase"/>
</dbReference>
<dbReference type="InterPro" id="IPR008268">
    <property type="entry name" value="Peptidase_S16_AS"/>
</dbReference>
<dbReference type="InterPro" id="IPR015947">
    <property type="entry name" value="PUA-like_sf"/>
</dbReference>
<dbReference type="InterPro" id="IPR020568">
    <property type="entry name" value="Ribosomal_Su5_D2-typ_SF"/>
</dbReference>
<dbReference type="InterPro" id="IPR014721">
    <property type="entry name" value="Ribsml_uS5_D2-typ_fold_subgr"/>
</dbReference>
<dbReference type="NCBIfam" id="TIGR00763">
    <property type="entry name" value="lon"/>
    <property type="match status" value="1"/>
</dbReference>
<dbReference type="PANTHER" id="PTHR10046">
    <property type="entry name" value="ATP DEPENDENT LON PROTEASE FAMILY MEMBER"/>
    <property type="match status" value="1"/>
</dbReference>
<dbReference type="Pfam" id="PF00004">
    <property type="entry name" value="AAA"/>
    <property type="match status" value="1"/>
</dbReference>
<dbReference type="Pfam" id="PF05362">
    <property type="entry name" value="Lon_C"/>
    <property type="match status" value="1"/>
</dbReference>
<dbReference type="Pfam" id="PF22667">
    <property type="entry name" value="Lon_lid"/>
    <property type="match status" value="1"/>
</dbReference>
<dbReference type="Pfam" id="PF02190">
    <property type="entry name" value="LON_substr_bdg"/>
    <property type="match status" value="1"/>
</dbReference>
<dbReference type="PIRSF" id="PIRSF001174">
    <property type="entry name" value="Lon_proteas"/>
    <property type="match status" value="1"/>
</dbReference>
<dbReference type="PRINTS" id="PR00830">
    <property type="entry name" value="ENDOLAPTASE"/>
</dbReference>
<dbReference type="SMART" id="SM00382">
    <property type="entry name" value="AAA"/>
    <property type="match status" value="1"/>
</dbReference>
<dbReference type="SMART" id="SM00464">
    <property type="entry name" value="LON"/>
    <property type="match status" value="1"/>
</dbReference>
<dbReference type="SUPFAM" id="SSF52540">
    <property type="entry name" value="P-loop containing nucleoside triphosphate hydrolases"/>
    <property type="match status" value="1"/>
</dbReference>
<dbReference type="SUPFAM" id="SSF88697">
    <property type="entry name" value="PUA domain-like"/>
    <property type="match status" value="1"/>
</dbReference>
<dbReference type="SUPFAM" id="SSF54211">
    <property type="entry name" value="Ribosomal protein S5 domain 2-like"/>
    <property type="match status" value="1"/>
</dbReference>
<dbReference type="PROSITE" id="PS51787">
    <property type="entry name" value="LON_N"/>
    <property type="match status" value="1"/>
</dbReference>
<dbReference type="PROSITE" id="PS51786">
    <property type="entry name" value="LON_PROTEOLYTIC"/>
    <property type="match status" value="1"/>
</dbReference>
<dbReference type="PROSITE" id="PS01046">
    <property type="entry name" value="LON_SER"/>
    <property type="match status" value="1"/>
</dbReference>
<name>LON_DESOH</name>
<sequence length="817" mass="90649">MAQPKIPEYKANGTTDKLPETVPIMPLSDGVLFPKMIIPVVITQNEYMTLIDEVMSGNRLVALITPKSGERKSDYGPGDLSPIGTLALILKMAKPDESRIHLMLQGISRIRTKNFIKTDPYLEAAFAQITENEKKDKETEGLMSNISNVYQELVRISPAIPNELGAMAVTIDEPGSLADMVASTINSSTEEKQNILETLDVKLRLKKVTRQLNHQLEILKLGDKIQSQIKEDMDKQQKEFYLRKQLKAIREELGEKEEGNVEAEEYRTKIEEGNLPEEAYKAATRELERFSRMHPSSSEYTVSSTYLDWLTTLPWDKQTEDHLDIKKARAILDKDHFGLEKPKKRILEYLAVRKLNPDSKGPILCFLGPPGTGKTSLGRSIARALGREFIRISLGGVRDEAEIRGHRRTYVGALPGRIIQEIRKAGTNNPVFMLDEIDKVGADFKGDPSSALLEVLDPEQNFSFADHYLDVSFDLSRVMFVATANVIDTIPPALRDRMEVIGLRGYTLEEKVKIARQYLIPRQRKENGLAAKHISFSQSAIRHIISDYTREAGLRNAEREIASVCRGVAAKIAEGKKVSGAIKPEDLYEYLGPVRFTSETGENALTPGVVMGLAWTPVGGEILFIEATSMKGKRGLTLTGQLGDVMKESATAALSFIRAHARDYDIDEDFFDKYDFHIHVPSGAIPKDGPSAGVTMLTALVSLLTGRKVKKGLAMTGEITLRGKVMPVGGIKEKVIAAHRAGIKEVILPRPNKKDLEEIPAKVKSAMKFHFAEKMGDVLELALNGNGATKKKKKTPAKSKKSTKPAAKKTAARKSRK</sequence>
<gene>
    <name evidence="1" type="primary">lon</name>
    <name type="ordered locus">Dole_1099</name>
</gene>
<accession>A8ZX50</accession>
<proteinExistence type="inferred from homology"/>
<keyword id="KW-0067">ATP-binding</keyword>
<keyword id="KW-0963">Cytoplasm</keyword>
<keyword id="KW-0378">Hydrolase</keyword>
<keyword id="KW-0547">Nucleotide-binding</keyword>
<keyword id="KW-0645">Protease</keyword>
<keyword id="KW-1185">Reference proteome</keyword>
<keyword id="KW-0720">Serine protease</keyword>
<keyword id="KW-0346">Stress response</keyword>
<protein>
    <recommendedName>
        <fullName evidence="1">Lon protease</fullName>
        <ecNumber evidence="1">3.4.21.53</ecNumber>
    </recommendedName>
    <alternativeName>
        <fullName evidence="1">ATP-dependent protease La</fullName>
    </alternativeName>
</protein>
<feature type="chain" id="PRO_0000396554" description="Lon protease">
    <location>
        <begin position="1"/>
        <end position="817"/>
    </location>
</feature>
<feature type="domain" description="Lon N-terminal" evidence="3">
    <location>
        <begin position="22"/>
        <end position="216"/>
    </location>
</feature>
<feature type="domain" description="Lon proteolytic" evidence="2">
    <location>
        <begin position="604"/>
        <end position="785"/>
    </location>
</feature>
<feature type="region of interest" description="Disordered" evidence="4">
    <location>
        <begin position="784"/>
        <end position="817"/>
    </location>
</feature>
<feature type="compositionally biased region" description="Basic residues" evidence="4">
    <location>
        <begin position="789"/>
        <end position="817"/>
    </location>
</feature>
<feature type="active site" evidence="1">
    <location>
        <position position="691"/>
    </location>
</feature>
<feature type="active site" evidence="1">
    <location>
        <position position="734"/>
    </location>
</feature>
<feature type="binding site" evidence="1">
    <location>
        <begin position="368"/>
        <end position="375"/>
    </location>
    <ligand>
        <name>ATP</name>
        <dbReference type="ChEBI" id="CHEBI:30616"/>
    </ligand>
</feature>
<comment type="function">
    <text evidence="1">ATP-dependent serine protease that mediates the selective degradation of mutant and abnormal proteins as well as certain short-lived regulatory proteins. Required for cellular homeostasis and for survival from DNA damage and developmental changes induced by stress. Degrades polypeptides processively to yield small peptide fragments that are 5 to 10 amino acids long. Binds to DNA in a double-stranded, site-specific manner.</text>
</comment>
<comment type="catalytic activity">
    <reaction evidence="1">
        <text>Hydrolysis of proteins in presence of ATP.</text>
        <dbReference type="EC" id="3.4.21.53"/>
    </reaction>
</comment>
<comment type="subunit">
    <text evidence="1">Homohexamer. Organized in a ring with a central cavity.</text>
</comment>
<comment type="subcellular location">
    <subcellularLocation>
        <location evidence="1">Cytoplasm</location>
    </subcellularLocation>
</comment>
<comment type="induction">
    <text evidence="1">By heat shock.</text>
</comment>
<comment type="similarity">
    <text evidence="1">Belongs to the peptidase S16 family.</text>
</comment>